<comment type="function">
    <text evidence="1">Catalyzes the transfer of pyrophosphate from adenosine triphosphate (ATP) to 6-hydroxymethyl-7,8-dihydropterin, an enzymatic step in folate biosynthesis pathway.</text>
</comment>
<comment type="catalytic activity">
    <reaction evidence="1">
        <text>6-hydroxymethyl-7,8-dihydropterin + ATP = (7,8-dihydropterin-6-yl)methyl diphosphate + AMP + H(+)</text>
        <dbReference type="Rhea" id="RHEA:11412"/>
        <dbReference type="ChEBI" id="CHEBI:15378"/>
        <dbReference type="ChEBI" id="CHEBI:30616"/>
        <dbReference type="ChEBI" id="CHEBI:44841"/>
        <dbReference type="ChEBI" id="CHEBI:72950"/>
        <dbReference type="ChEBI" id="CHEBI:456215"/>
        <dbReference type="EC" id="2.7.6.3"/>
    </reaction>
    <physiologicalReaction direction="left-to-right" evidence="1">
        <dbReference type="Rhea" id="RHEA:11413"/>
    </physiologicalReaction>
</comment>
<comment type="biophysicochemical properties">
    <temperatureDependence>
        <text evidence="1">Thermostable. Retains 75% of its activity after heating 30 minutes at 96 degrees Celsius.</text>
    </temperatureDependence>
</comment>
<comment type="pathway">
    <text evidence="4">Cofactor biosynthesis; tetrahydrofolate biosynthesis; 2-amino-4-hydroxy-6-hydroxymethyl-7,8-dihydropteridine diphosphate from 7,8-dihydroneopterin triphosphate: step 4/4.</text>
</comment>
<comment type="subunit">
    <text evidence="1">Monomer.</text>
</comment>
<comment type="similarity">
    <text evidence="3">Belongs to the HPPK family.</text>
</comment>
<protein>
    <recommendedName>
        <fullName>2-amino-4-hydroxy-6-hydroxymethyldihydropteridine pyrophosphokinase</fullName>
        <ecNumber evidence="1">2.7.6.3</ecNumber>
    </recommendedName>
    <alternativeName>
        <fullName>6-hydroxymethyl-7,8-dihydropterin pyrophosphokinase</fullName>
        <shortName>PPPK</shortName>
    </alternativeName>
    <alternativeName>
        <fullName>7,8-dihydro-6-hydroxymethylpterin-pyrophosphokinase</fullName>
        <shortName>HPPK</shortName>
    </alternativeName>
</protein>
<sequence>MTVAYIAIGSNLASPLEQVNAALKALGDIPESHILTVSSFYRTPPLGPQDQPDYLNAAVALETSLAPEELLNHTQRIELQQGRVRKAERWGPRTLDLDIMLFGNEVINTERLTVPHYDMKNRGFMLWPLFEIAPELVFPDGEMLRQILHTRAFDKLNKW</sequence>
<keyword id="KW-0002">3D-structure</keyword>
<keyword id="KW-0067">ATP-binding</keyword>
<keyword id="KW-0903">Direct protein sequencing</keyword>
<keyword id="KW-0289">Folate biosynthesis</keyword>
<keyword id="KW-0418">Kinase</keyword>
<keyword id="KW-0547">Nucleotide-binding</keyword>
<keyword id="KW-1185">Reference proteome</keyword>
<keyword id="KW-0808">Transferase</keyword>
<proteinExistence type="evidence at protein level"/>
<accession>P26281</accession>
<evidence type="ECO:0000269" key="1">
    <source>
    </source>
</evidence>
<evidence type="ECO:0000269" key="2">
    <source>
    </source>
</evidence>
<evidence type="ECO:0000305" key="3"/>
<evidence type="ECO:0000305" key="4">
    <source>
    </source>
</evidence>
<evidence type="ECO:0007829" key="5">
    <source>
        <dbReference type="PDB" id="1IM6"/>
    </source>
</evidence>
<evidence type="ECO:0007829" key="6">
    <source>
        <dbReference type="PDB" id="1RU1"/>
    </source>
</evidence>
<evidence type="ECO:0007829" key="7">
    <source>
        <dbReference type="PDB" id="1RU2"/>
    </source>
</evidence>
<evidence type="ECO:0007829" key="8">
    <source>
        <dbReference type="PDB" id="2F63"/>
    </source>
</evidence>
<evidence type="ECO:0007829" key="9">
    <source>
        <dbReference type="PDB" id="3HD2"/>
    </source>
</evidence>
<evidence type="ECO:0007829" key="10">
    <source>
        <dbReference type="PDB" id="3IP0"/>
    </source>
</evidence>
<evidence type="ECO:0007829" key="11">
    <source>
        <dbReference type="PDB" id="5ETO"/>
    </source>
</evidence>
<evidence type="ECO:0007829" key="12">
    <source>
        <dbReference type="PDB" id="5ETP"/>
    </source>
</evidence>
<evidence type="ECO:0007829" key="13">
    <source>
        <dbReference type="PDB" id="7KDR"/>
    </source>
</evidence>
<name>HPPK_ECOLI</name>
<dbReference type="EC" id="2.7.6.3" evidence="1"/>
<dbReference type="EMBL" id="L06495">
    <property type="protein sequence ID" value="AAB53446.1"/>
    <property type="molecule type" value="Genomic_DNA"/>
</dbReference>
<dbReference type="EMBL" id="M20574">
    <property type="status" value="NOT_ANNOTATED_CDS"/>
    <property type="molecule type" value="Genomic_DNA"/>
</dbReference>
<dbReference type="EMBL" id="U00096">
    <property type="protein sequence ID" value="AAC73253.1"/>
    <property type="molecule type" value="Genomic_DNA"/>
</dbReference>
<dbReference type="EMBL" id="AP009048">
    <property type="protein sequence ID" value="BAB96719.1"/>
    <property type="molecule type" value="Genomic_DNA"/>
</dbReference>
<dbReference type="PIR" id="A43325">
    <property type="entry name" value="A43325"/>
</dbReference>
<dbReference type="RefSeq" id="NP_414684.1">
    <property type="nucleotide sequence ID" value="NC_000913.3"/>
</dbReference>
<dbReference type="RefSeq" id="WP_000215139.1">
    <property type="nucleotide sequence ID" value="NZ_STEB01000010.1"/>
</dbReference>
<dbReference type="PDB" id="1DY3">
    <property type="method" value="X-ray"/>
    <property type="resolution" value="2.00 A"/>
    <property type="chains" value="A=2-159"/>
</dbReference>
<dbReference type="PDB" id="1EQ0">
    <property type="method" value="NMR"/>
    <property type="chains" value="A=2-159"/>
</dbReference>
<dbReference type="PDB" id="1EQM">
    <property type="method" value="X-ray"/>
    <property type="resolution" value="1.50 A"/>
    <property type="chains" value="A=2-159"/>
</dbReference>
<dbReference type="PDB" id="1EX8">
    <property type="method" value="X-ray"/>
    <property type="resolution" value="1.85 A"/>
    <property type="chains" value="A=2-159"/>
</dbReference>
<dbReference type="PDB" id="1F9H">
    <property type="method" value="X-ray"/>
    <property type="resolution" value="1.50 A"/>
    <property type="chains" value="A=2-159"/>
</dbReference>
<dbReference type="PDB" id="1G4C">
    <property type="method" value="X-ray"/>
    <property type="resolution" value="1.65 A"/>
    <property type="chains" value="A/B=2-159"/>
</dbReference>
<dbReference type="PDB" id="1HKA">
    <property type="method" value="X-ray"/>
    <property type="resolution" value="1.50 A"/>
    <property type="chains" value="A=2-159"/>
</dbReference>
<dbReference type="PDB" id="1HQ2">
    <property type="method" value="X-ray"/>
    <property type="resolution" value="1.25 A"/>
    <property type="chains" value="A=2-159"/>
</dbReference>
<dbReference type="PDB" id="1IM6">
    <property type="method" value="X-ray"/>
    <property type="resolution" value="1.74 A"/>
    <property type="chains" value="A=2-159"/>
</dbReference>
<dbReference type="PDB" id="1KBR">
    <property type="method" value="X-ray"/>
    <property type="resolution" value="1.55 A"/>
    <property type="chains" value="A=2-159"/>
</dbReference>
<dbReference type="PDB" id="1Q0N">
    <property type="method" value="X-ray"/>
    <property type="resolution" value="1.25 A"/>
    <property type="chains" value="A=2-159"/>
</dbReference>
<dbReference type="PDB" id="1RAO">
    <property type="method" value="X-ray"/>
    <property type="resolution" value="1.56 A"/>
    <property type="chains" value="A=2-159"/>
</dbReference>
<dbReference type="PDB" id="1RB0">
    <property type="method" value="X-ray"/>
    <property type="resolution" value="1.35 A"/>
    <property type="chains" value="A=2-159"/>
</dbReference>
<dbReference type="PDB" id="1RTZ">
    <property type="method" value="X-ray"/>
    <property type="resolution" value="1.33 A"/>
    <property type="chains" value="A=2-159"/>
</dbReference>
<dbReference type="PDB" id="1RU1">
    <property type="method" value="X-ray"/>
    <property type="resolution" value="1.40 A"/>
    <property type="chains" value="A/B=2-159"/>
</dbReference>
<dbReference type="PDB" id="1RU2">
    <property type="method" value="X-ray"/>
    <property type="resolution" value="1.48 A"/>
    <property type="chains" value="A=2-159"/>
</dbReference>
<dbReference type="PDB" id="1TMJ">
    <property type="method" value="X-ray"/>
    <property type="resolution" value="1.45 A"/>
    <property type="chains" value="A=2-159"/>
</dbReference>
<dbReference type="PDB" id="1TMM">
    <property type="method" value="X-ray"/>
    <property type="resolution" value="1.25 A"/>
    <property type="chains" value="A/B=2-159"/>
</dbReference>
<dbReference type="PDB" id="2F63">
    <property type="method" value="NMR"/>
    <property type="chains" value="A=2-159"/>
</dbReference>
<dbReference type="PDB" id="2F65">
    <property type="method" value="NMR"/>
    <property type="chains" value="A=2-159"/>
</dbReference>
<dbReference type="PDB" id="3HCX">
    <property type="method" value="X-ray"/>
    <property type="resolution" value="1.75 A"/>
    <property type="chains" value="A=2-159"/>
</dbReference>
<dbReference type="PDB" id="3HD1">
    <property type="method" value="X-ray"/>
    <property type="resolution" value="1.30 A"/>
    <property type="chains" value="A=2-159"/>
</dbReference>
<dbReference type="PDB" id="3HD2">
    <property type="method" value="X-ray"/>
    <property type="resolution" value="1.10 A"/>
    <property type="chains" value="A=2-159"/>
</dbReference>
<dbReference type="PDB" id="3HSD">
    <property type="method" value="X-ray"/>
    <property type="resolution" value="1.65 A"/>
    <property type="chains" value="A/B=2-159"/>
</dbReference>
<dbReference type="PDB" id="3HSG">
    <property type="method" value="X-ray"/>
    <property type="resolution" value="1.14 A"/>
    <property type="chains" value="A=2-159"/>
</dbReference>
<dbReference type="PDB" id="3HSJ">
    <property type="method" value="X-ray"/>
    <property type="resolution" value="1.18 A"/>
    <property type="chains" value="A=2-159"/>
</dbReference>
<dbReference type="PDB" id="3HSZ">
    <property type="method" value="X-ray"/>
    <property type="resolution" value="1.40 A"/>
    <property type="chains" value="A=2-159"/>
</dbReference>
<dbReference type="PDB" id="3HT0">
    <property type="method" value="X-ray"/>
    <property type="resolution" value="1.40 A"/>
    <property type="chains" value="A=2-159"/>
</dbReference>
<dbReference type="PDB" id="3ILI">
    <property type="method" value="X-ray"/>
    <property type="resolution" value="1.45 A"/>
    <property type="chains" value="A=2-159"/>
</dbReference>
<dbReference type="PDB" id="3ILJ">
    <property type="method" value="X-ray"/>
    <property type="resolution" value="1.65 A"/>
    <property type="chains" value="A=2-159"/>
</dbReference>
<dbReference type="PDB" id="3ILL">
    <property type="method" value="X-ray"/>
    <property type="resolution" value="1.73 A"/>
    <property type="chains" value="A=2-159"/>
</dbReference>
<dbReference type="PDB" id="3ILO">
    <property type="method" value="X-ray"/>
    <property type="resolution" value="1.10 A"/>
    <property type="chains" value="A=2-159"/>
</dbReference>
<dbReference type="PDB" id="3IP0">
    <property type="method" value="X-ray"/>
    <property type="resolution" value="0.89 A"/>
    <property type="chains" value="A=2-159"/>
</dbReference>
<dbReference type="PDB" id="3KUE">
    <property type="method" value="X-ray"/>
    <property type="resolution" value="1.54 A"/>
    <property type="chains" value="A=2-159"/>
</dbReference>
<dbReference type="PDB" id="3KUG">
    <property type="method" value="X-ray"/>
    <property type="resolution" value="2.00 A"/>
    <property type="chains" value="A=2-159"/>
</dbReference>
<dbReference type="PDB" id="3KUH">
    <property type="method" value="X-ray"/>
    <property type="resolution" value="1.35 A"/>
    <property type="chains" value="A=2-159"/>
</dbReference>
<dbReference type="PDB" id="3UD5">
    <property type="method" value="X-ray"/>
    <property type="resolution" value="2.00 A"/>
    <property type="chains" value="A=2-159"/>
</dbReference>
<dbReference type="PDB" id="3UDE">
    <property type="method" value="X-ray"/>
    <property type="resolution" value="1.88 A"/>
    <property type="chains" value="A=2-159"/>
</dbReference>
<dbReference type="PDB" id="3UDV">
    <property type="method" value="X-ray"/>
    <property type="resolution" value="1.88 A"/>
    <property type="chains" value="A=2-159"/>
</dbReference>
<dbReference type="PDB" id="4F7V">
    <property type="method" value="X-ray"/>
    <property type="resolution" value="1.73 A"/>
    <property type="chains" value="A=2-159"/>
</dbReference>
<dbReference type="PDB" id="4M5G">
    <property type="method" value="X-ray"/>
    <property type="resolution" value="1.31 A"/>
    <property type="chains" value="A=1-159"/>
</dbReference>
<dbReference type="PDB" id="4M5H">
    <property type="method" value="X-ray"/>
    <property type="resolution" value="1.11 A"/>
    <property type="chains" value="A=1-159"/>
</dbReference>
<dbReference type="PDB" id="4M5I">
    <property type="method" value="X-ray"/>
    <property type="resolution" value="1.08 A"/>
    <property type="chains" value="A=1-159"/>
</dbReference>
<dbReference type="PDB" id="4M5J">
    <property type="method" value="X-ray"/>
    <property type="resolution" value="1.70 A"/>
    <property type="chains" value="A=1-159"/>
</dbReference>
<dbReference type="PDB" id="4M5K">
    <property type="method" value="X-ray"/>
    <property type="resolution" value="1.30 A"/>
    <property type="chains" value="A=1-159"/>
</dbReference>
<dbReference type="PDB" id="4M5L">
    <property type="method" value="X-ray"/>
    <property type="resolution" value="1.09 A"/>
    <property type="chains" value="A=1-159"/>
</dbReference>
<dbReference type="PDB" id="4M5M">
    <property type="method" value="X-ray"/>
    <property type="resolution" value="1.12 A"/>
    <property type="chains" value="A=1-159"/>
</dbReference>
<dbReference type="PDB" id="4M5N">
    <property type="method" value="X-ray"/>
    <property type="resolution" value="2.00 A"/>
    <property type="chains" value="A/B=1-159"/>
</dbReference>
<dbReference type="PDB" id="5ETK">
    <property type="method" value="X-ray"/>
    <property type="resolution" value="1.09 A"/>
    <property type="chains" value="A=1-159"/>
</dbReference>
<dbReference type="PDB" id="5ETL">
    <property type="method" value="X-ray"/>
    <property type="resolution" value="1.82 A"/>
    <property type="chains" value="A/B/C/D=1-159"/>
</dbReference>
<dbReference type="PDB" id="5ETM">
    <property type="method" value="X-ray"/>
    <property type="resolution" value="1.46 A"/>
    <property type="chains" value="A=1-159"/>
</dbReference>
<dbReference type="PDB" id="5ETN">
    <property type="method" value="X-ray"/>
    <property type="resolution" value="1.40 A"/>
    <property type="chains" value="A=1-159"/>
</dbReference>
<dbReference type="PDB" id="5ETO">
    <property type="method" value="X-ray"/>
    <property type="resolution" value="1.07 A"/>
    <property type="chains" value="A=1-159"/>
</dbReference>
<dbReference type="PDB" id="5ETP">
    <property type="method" value="X-ray"/>
    <property type="resolution" value="1.05 A"/>
    <property type="chains" value="A=1-159"/>
</dbReference>
<dbReference type="PDB" id="6AN4">
    <property type="method" value="X-ray"/>
    <property type="resolution" value="1.47 A"/>
    <property type="chains" value="A=2-159"/>
</dbReference>
<dbReference type="PDB" id="6AN6">
    <property type="method" value="X-ray"/>
    <property type="resolution" value="2.30 A"/>
    <property type="chains" value="A/B=2-159"/>
</dbReference>
<dbReference type="PDB" id="7KDO">
    <property type="method" value="X-ray"/>
    <property type="resolution" value="1.60 A"/>
    <property type="chains" value="A=2-159"/>
</dbReference>
<dbReference type="PDB" id="7KDR">
    <property type="method" value="X-ray"/>
    <property type="resolution" value="1.49 A"/>
    <property type="chains" value="A=2-159"/>
</dbReference>
<dbReference type="PDB" id="8SIF">
    <property type="method" value="X-ray"/>
    <property type="resolution" value="1.70 A"/>
    <property type="chains" value="A=1-159"/>
</dbReference>
<dbReference type="PDBsum" id="1DY3"/>
<dbReference type="PDBsum" id="1EQ0"/>
<dbReference type="PDBsum" id="1EQM"/>
<dbReference type="PDBsum" id="1EX8"/>
<dbReference type="PDBsum" id="1F9H"/>
<dbReference type="PDBsum" id="1G4C"/>
<dbReference type="PDBsum" id="1HKA"/>
<dbReference type="PDBsum" id="1HQ2"/>
<dbReference type="PDBsum" id="1IM6"/>
<dbReference type="PDBsum" id="1KBR"/>
<dbReference type="PDBsum" id="1Q0N"/>
<dbReference type="PDBsum" id="1RAO"/>
<dbReference type="PDBsum" id="1RB0"/>
<dbReference type="PDBsum" id="1RTZ"/>
<dbReference type="PDBsum" id="1RU1"/>
<dbReference type="PDBsum" id="1RU2"/>
<dbReference type="PDBsum" id="1TMJ"/>
<dbReference type="PDBsum" id="1TMM"/>
<dbReference type="PDBsum" id="2F63"/>
<dbReference type="PDBsum" id="2F65"/>
<dbReference type="PDBsum" id="3HCX"/>
<dbReference type="PDBsum" id="3HD1"/>
<dbReference type="PDBsum" id="3HD2"/>
<dbReference type="PDBsum" id="3HSD"/>
<dbReference type="PDBsum" id="3HSG"/>
<dbReference type="PDBsum" id="3HSJ"/>
<dbReference type="PDBsum" id="3HSZ"/>
<dbReference type="PDBsum" id="3HT0"/>
<dbReference type="PDBsum" id="3ILI"/>
<dbReference type="PDBsum" id="3ILJ"/>
<dbReference type="PDBsum" id="3ILL"/>
<dbReference type="PDBsum" id="3ILO"/>
<dbReference type="PDBsum" id="3IP0"/>
<dbReference type="PDBsum" id="3KUE"/>
<dbReference type="PDBsum" id="3KUG"/>
<dbReference type="PDBsum" id="3KUH"/>
<dbReference type="PDBsum" id="3UD5"/>
<dbReference type="PDBsum" id="3UDE"/>
<dbReference type="PDBsum" id="3UDV"/>
<dbReference type="PDBsum" id="4F7V"/>
<dbReference type="PDBsum" id="4M5G"/>
<dbReference type="PDBsum" id="4M5H"/>
<dbReference type="PDBsum" id="4M5I"/>
<dbReference type="PDBsum" id="4M5J"/>
<dbReference type="PDBsum" id="4M5K"/>
<dbReference type="PDBsum" id="4M5L"/>
<dbReference type="PDBsum" id="4M5M"/>
<dbReference type="PDBsum" id="4M5N"/>
<dbReference type="PDBsum" id="5ETK"/>
<dbReference type="PDBsum" id="5ETL"/>
<dbReference type="PDBsum" id="5ETM"/>
<dbReference type="PDBsum" id="5ETN"/>
<dbReference type="PDBsum" id="5ETO"/>
<dbReference type="PDBsum" id="5ETP"/>
<dbReference type="PDBsum" id="6AN4"/>
<dbReference type="PDBsum" id="6AN6"/>
<dbReference type="PDBsum" id="7KDO"/>
<dbReference type="PDBsum" id="7KDR"/>
<dbReference type="PDBsum" id="8SIF"/>
<dbReference type="BMRB" id="P26281"/>
<dbReference type="SMR" id="P26281"/>
<dbReference type="BioGRID" id="4263030">
    <property type="interactions" value="2"/>
</dbReference>
<dbReference type="FunCoup" id="P26281">
    <property type="interactions" value="732"/>
</dbReference>
<dbReference type="IntAct" id="P26281">
    <property type="interactions" value="2"/>
</dbReference>
<dbReference type="STRING" id="511145.b0142"/>
<dbReference type="BindingDB" id="P26281"/>
<dbReference type="ChEMBL" id="CHEMBL3217379"/>
<dbReference type="DrugBank" id="DB04158">
    <property type="generic name" value="6-(adenosine tetraphosphate-methyl)-7,8-dihydropterin"/>
</dbReference>
<dbReference type="DrugBank" id="DB02119">
    <property type="generic name" value="6-Hydroxymethyl-7,8-Dihydropterin"/>
</dbReference>
<dbReference type="DrugBank" id="DB03197">
    <property type="generic name" value="6-Hydroxymethylpterin"/>
</dbReference>
<dbReference type="DrugBank" id="DB04047">
    <property type="generic name" value="6-hydroxymethylpterin diphosphate"/>
</dbReference>
<dbReference type="DrugBank" id="DB04610">
    <property type="generic name" value="7,8-dihydro-6-hydroxymethyl-7-methyl-7-[2-phenylethyl]-pterin"/>
</dbReference>
<dbReference type="DrugBank" id="DB02596">
    <property type="generic name" value="alpha,beta-Methyleneadenosine 5'-triphosphate"/>
</dbReference>
<dbReference type="DrugCentral" id="P26281"/>
<dbReference type="jPOST" id="P26281"/>
<dbReference type="PaxDb" id="511145-b0142"/>
<dbReference type="EnsemblBacteria" id="AAC73253">
    <property type="protein sequence ID" value="AAC73253"/>
    <property type="gene ID" value="b0142"/>
</dbReference>
<dbReference type="GeneID" id="948792"/>
<dbReference type="KEGG" id="ecj:JW0138"/>
<dbReference type="KEGG" id="eco:b0142"/>
<dbReference type="KEGG" id="ecoc:C3026_00615"/>
<dbReference type="PATRIC" id="fig|1411691.4.peg.2139"/>
<dbReference type="EchoBASE" id="EB1348"/>
<dbReference type="eggNOG" id="COG0801">
    <property type="taxonomic scope" value="Bacteria"/>
</dbReference>
<dbReference type="HOGENOM" id="CLU_097916_0_1_6"/>
<dbReference type="InParanoid" id="P26281"/>
<dbReference type="OMA" id="TLPHPKW"/>
<dbReference type="OrthoDB" id="9808041at2"/>
<dbReference type="PhylomeDB" id="P26281"/>
<dbReference type="BioCyc" id="EcoCyc:H2PTERIDINEPYROPHOSPHOKIN-MONOMER"/>
<dbReference type="BioCyc" id="MetaCyc:H2PTERIDINEPYROPHOSPHOKIN-MONOMER"/>
<dbReference type="BRENDA" id="2.7.6.3">
    <property type="organism ID" value="2026"/>
</dbReference>
<dbReference type="SABIO-RK" id="P26281"/>
<dbReference type="UniPathway" id="UPA00077">
    <property type="reaction ID" value="UER00155"/>
</dbReference>
<dbReference type="EvolutionaryTrace" id="P26281"/>
<dbReference type="PRO" id="PR:P26281"/>
<dbReference type="Proteomes" id="UP000000625">
    <property type="component" value="Chromosome"/>
</dbReference>
<dbReference type="GO" id="GO:0003848">
    <property type="term" value="F:2-amino-4-hydroxy-6-hydroxymethyldihydropteridine diphosphokinase activity"/>
    <property type="evidence" value="ECO:0000314"/>
    <property type="project" value="EcoliWiki"/>
</dbReference>
<dbReference type="GO" id="GO:0005524">
    <property type="term" value="F:ATP binding"/>
    <property type="evidence" value="ECO:0007669"/>
    <property type="project" value="UniProtKB-KW"/>
</dbReference>
<dbReference type="GO" id="GO:0016301">
    <property type="term" value="F:kinase activity"/>
    <property type="evidence" value="ECO:0007669"/>
    <property type="project" value="UniProtKB-KW"/>
</dbReference>
<dbReference type="GO" id="GO:0000287">
    <property type="term" value="F:magnesium ion binding"/>
    <property type="evidence" value="ECO:0000314"/>
    <property type="project" value="EcoCyc"/>
</dbReference>
<dbReference type="GO" id="GO:0046656">
    <property type="term" value="P:folic acid biosynthetic process"/>
    <property type="evidence" value="ECO:0007669"/>
    <property type="project" value="UniProtKB-KW"/>
</dbReference>
<dbReference type="GO" id="GO:0046654">
    <property type="term" value="P:tetrahydrofolate biosynthetic process"/>
    <property type="evidence" value="ECO:0007669"/>
    <property type="project" value="UniProtKB-UniPathway"/>
</dbReference>
<dbReference type="CDD" id="cd00483">
    <property type="entry name" value="HPPK"/>
    <property type="match status" value="1"/>
</dbReference>
<dbReference type="FunFam" id="3.30.70.560:FF:000001">
    <property type="entry name" value="2-amino-4-hydroxy-6-hydroxymethyldihydropteridine pyrophosphokinase"/>
    <property type="match status" value="1"/>
</dbReference>
<dbReference type="Gene3D" id="3.30.70.560">
    <property type="entry name" value="7,8-Dihydro-6-hydroxymethylpterin-pyrophosphokinase HPPK"/>
    <property type="match status" value="1"/>
</dbReference>
<dbReference type="InterPro" id="IPR000550">
    <property type="entry name" value="Hppk"/>
</dbReference>
<dbReference type="InterPro" id="IPR035907">
    <property type="entry name" value="Hppk_sf"/>
</dbReference>
<dbReference type="NCBIfam" id="TIGR01498">
    <property type="entry name" value="folK"/>
    <property type="match status" value="1"/>
</dbReference>
<dbReference type="NCBIfam" id="NF007595">
    <property type="entry name" value="PRK10239.1"/>
    <property type="match status" value="1"/>
</dbReference>
<dbReference type="PANTHER" id="PTHR43071">
    <property type="entry name" value="2-AMINO-4-HYDROXY-6-HYDROXYMETHYLDIHYDROPTERIDINE PYROPHOSPHOKINASE"/>
    <property type="match status" value="1"/>
</dbReference>
<dbReference type="PANTHER" id="PTHR43071:SF1">
    <property type="entry name" value="2-AMINO-4-HYDROXY-6-HYDROXYMETHYLDIHYDROPTERIDINE PYROPHOSPHOKINASE"/>
    <property type="match status" value="1"/>
</dbReference>
<dbReference type="Pfam" id="PF01288">
    <property type="entry name" value="HPPK"/>
    <property type="match status" value="1"/>
</dbReference>
<dbReference type="SUPFAM" id="SSF55083">
    <property type="entry name" value="6-hydroxymethyl-7,8-dihydropterin pyrophosphokinase, HPPK"/>
    <property type="match status" value="1"/>
</dbReference>
<dbReference type="PROSITE" id="PS00794">
    <property type="entry name" value="HPPK"/>
    <property type="match status" value="1"/>
</dbReference>
<reference key="1">
    <citation type="journal article" date="1992" name="J. Bacteriol.">
        <title>Cloning, sequence analysis, and overexpression of Escherichia coli folK, the gene coding for 7,8-dihydro-6-hydroxymethylpterin-pyrophosphokinase.</title>
        <authorList>
            <person name="Talarico T.L."/>
            <person name="Ray P.H."/>
            <person name="Dev I.K."/>
            <person name="Merrill B.M."/>
            <person name="Dallas W.S."/>
        </authorList>
    </citation>
    <scope>NUCLEOTIDE SEQUENCE [GENOMIC DNA]</scope>
    <scope>PROTEIN SEQUENCE OF 2-20</scope>
    <scope>FUNCTION</scope>
    <scope>CATALYTIC ACTIVITY</scope>
    <scope>BIOPHYSICOCHEMICAL PROPERTIES</scope>
    <scope>SUBUNIT</scope>
    <scope>PATHWAY</scope>
    <source>
        <strain>K12 / MC4100 / ATCC 35695 / DSM 6574</strain>
    </source>
</reference>
<reference key="2">
    <citation type="journal article" date="1994" name="Nucleic Acids Res.">
        <title>Systematic sequencing of the Escherichia coli genome: analysis of the 2.4-4.1 min (110,917-193,643 bp) region.</title>
        <authorList>
            <person name="Fujita N."/>
            <person name="Mori H."/>
            <person name="Yura T."/>
            <person name="Ishihama A."/>
        </authorList>
    </citation>
    <scope>NUCLEOTIDE SEQUENCE [LARGE SCALE GENOMIC DNA]</scope>
    <source>
        <strain>K12 / W3110 / ATCC 27325 / DSM 5911</strain>
    </source>
</reference>
<reference key="3">
    <citation type="journal article" date="1997" name="Science">
        <title>The complete genome sequence of Escherichia coli K-12.</title>
        <authorList>
            <person name="Blattner F.R."/>
            <person name="Plunkett G. III"/>
            <person name="Bloch C.A."/>
            <person name="Perna N.T."/>
            <person name="Burland V."/>
            <person name="Riley M."/>
            <person name="Collado-Vides J."/>
            <person name="Glasner J.D."/>
            <person name="Rode C.K."/>
            <person name="Mayhew G.F."/>
            <person name="Gregor J."/>
            <person name="Davis N.W."/>
            <person name="Kirkpatrick H.A."/>
            <person name="Goeden M.A."/>
            <person name="Rose D.J."/>
            <person name="Mau B."/>
            <person name="Shao Y."/>
        </authorList>
    </citation>
    <scope>NUCLEOTIDE SEQUENCE [LARGE SCALE GENOMIC DNA]</scope>
    <source>
        <strain>K12 / MG1655 / ATCC 47076</strain>
    </source>
</reference>
<reference key="4">
    <citation type="journal article" date="2006" name="Mol. Syst. Biol.">
        <title>Highly accurate genome sequences of Escherichia coli K-12 strains MG1655 and W3110.</title>
        <authorList>
            <person name="Hayashi K."/>
            <person name="Morooka N."/>
            <person name="Yamamoto Y."/>
            <person name="Fujita K."/>
            <person name="Isono K."/>
            <person name="Choi S."/>
            <person name="Ohtsubo E."/>
            <person name="Baba T."/>
            <person name="Wanner B.L."/>
            <person name="Mori H."/>
            <person name="Horiuchi T."/>
        </authorList>
    </citation>
    <scope>NUCLEOTIDE SEQUENCE [LARGE SCALE GENOMIC DNA]</scope>
    <source>
        <strain>K12 / W3110 / ATCC 27325 / DSM 5911</strain>
    </source>
</reference>
<reference key="5">
    <citation type="journal article" date="1991" name="J. Bacteriol.">
        <title>Purification and partial characterization of 7,8-dihydro-6-hydroxymethylpterin-pyrophosphokinase and 7,8-dihydropteroate synthase from Escherichia coli MC4100.</title>
        <authorList>
            <person name="Talarico T.L."/>
            <person name="Dev I.K."/>
            <person name="Dallas W.S."/>
            <person name="Ferone R."/>
            <person name="Ray P.H."/>
        </authorList>
    </citation>
    <scope>PROTEIN SEQUENCE OF 2-29</scope>
</reference>
<reference key="6">
    <citation type="journal article" date="1989" name="J. Bacteriol.">
        <title>Genetics and sequence analysis of the pcnB locus, an Escherichia coli gene involved in plasmid copy number control.</title>
        <authorList>
            <person name="Liu J."/>
            <person name="Parkinson J.S."/>
        </authorList>
    </citation>
    <scope>NUCLEOTIDE SEQUENCE [GENOMIC DNA] OF 1-28</scope>
    <source>
        <strain>K12 / RP437</strain>
    </source>
</reference>
<reference key="7">
    <citation type="journal article" date="1999" name="Structure">
        <title>Crystal structure of 6-hydroxymethyl-7,8-dihydropterin pyrophosphokinase, a potential target for the development of novel antimicrobial agents.</title>
        <authorList>
            <person name="Xiao B."/>
            <person name="Shi G."/>
            <person name="Chen X."/>
            <person name="Yan H."/>
            <person name="Ji X."/>
        </authorList>
    </citation>
    <scope>X-RAY CRYSTALLOGRAPHY (1.5 ANGSTROMS)</scope>
</reference>
<reference key="8">
    <citation type="journal article" date="1999" name="FEBS Lett.">
        <title>2.0 A X-ray structure of the ternary complex of 7,8-dihydro-6-hydroxymethylpterinpyrophosphokinase from Escherichia coli with ATP and a substrate analogue.</title>
        <authorList>
            <person name="Stammers D.K."/>
            <person name="Achari A."/>
            <person name="Somers D.O."/>
            <person name="Bryant P.K."/>
            <person name="Rosemond J."/>
            <person name="Scott D.L."/>
            <person name="Champness J.N."/>
        </authorList>
    </citation>
    <scope>X-RAY CRYSTALLOGRAPHY (2.0 ANGSTROMS)</scope>
</reference>
<feature type="initiator methionine" description="Removed" evidence="1 2">
    <location>
        <position position="1"/>
    </location>
</feature>
<feature type="chain" id="PRO_0000168249" description="2-amino-4-hydroxy-6-hydroxymethyldihydropteridine pyrophosphokinase">
    <location>
        <begin position="2"/>
        <end position="159"/>
    </location>
</feature>
<feature type="strand" evidence="10">
    <location>
        <begin position="3"/>
        <end position="10"/>
    </location>
</feature>
<feature type="strand" evidence="6">
    <location>
        <begin position="12"/>
        <end position="14"/>
    </location>
</feature>
<feature type="helix" evidence="10">
    <location>
        <begin position="15"/>
        <end position="27"/>
    </location>
</feature>
<feature type="strand" evidence="10">
    <location>
        <begin position="32"/>
        <end position="37"/>
    </location>
</feature>
<feature type="strand" evidence="10">
    <location>
        <begin position="41"/>
        <end position="43"/>
    </location>
</feature>
<feature type="strand" evidence="11">
    <location>
        <begin position="46"/>
        <end position="48"/>
    </location>
</feature>
<feature type="strand" evidence="10">
    <location>
        <begin position="49"/>
        <end position="51"/>
    </location>
</feature>
<feature type="strand" evidence="10">
    <location>
        <begin position="54"/>
        <end position="63"/>
    </location>
</feature>
<feature type="helix" evidence="10">
    <location>
        <begin position="67"/>
        <end position="80"/>
    </location>
</feature>
<feature type="strand" evidence="13">
    <location>
        <begin position="81"/>
        <end position="83"/>
    </location>
</feature>
<feature type="turn" evidence="5">
    <location>
        <begin position="84"/>
        <end position="86"/>
    </location>
</feature>
<feature type="strand" evidence="9">
    <location>
        <begin position="87"/>
        <end position="90"/>
    </location>
</feature>
<feature type="helix" evidence="7">
    <location>
        <begin position="91"/>
        <end position="93"/>
    </location>
</feature>
<feature type="strand" evidence="10">
    <location>
        <begin position="96"/>
        <end position="102"/>
    </location>
</feature>
<feature type="strand" evidence="12">
    <location>
        <begin position="107"/>
        <end position="111"/>
    </location>
</feature>
<feature type="strand" evidence="10">
    <location>
        <begin position="113"/>
        <end position="115"/>
    </location>
</feature>
<feature type="helix" evidence="10">
    <location>
        <begin position="119"/>
        <end position="121"/>
    </location>
</feature>
<feature type="helix" evidence="10">
    <location>
        <begin position="123"/>
        <end position="132"/>
    </location>
</feature>
<feature type="strand" evidence="8">
    <location>
        <begin position="139"/>
        <end position="141"/>
    </location>
</feature>
<feature type="helix" evidence="10">
    <location>
        <begin position="144"/>
        <end position="151"/>
    </location>
</feature>
<organism>
    <name type="scientific">Escherichia coli (strain K12)</name>
    <dbReference type="NCBI Taxonomy" id="83333"/>
    <lineage>
        <taxon>Bacteria</taxon>
        <taxon>Pseudomonadati</taxon>
        <taxon>Pseudomonadota</taxon>
        <taxon>Gammaproteobacteria</taxon>
        <taxon>Enterobacterales</taxon>
        <taxon>Enterobacteriaceae</taxon>
        <taxon>Escherichia</taxon>
    </lineage>
</organism>
<gene>
    <name type="primary">folK</name>
    <name type="ordered locus">b0142</name>
    <name type="ordered locus">JW0138</name>
</gene>